<organism>
    <name type="scientific">Homo sapiens</name>
    <name type="common">Human</name>
    <dbReference type="NCBI Taxonomy" id="9606"/>
    <lineage>
        <taxon>Eukaryota</taxon>
        <taxon>Metazoa</taxon>
        <taxon>Chordata</taxon>
        <taxon>Craniata</taxon>
        <taxon>Vertebrata</taxon>
        <taxon>Euteleostomi</taxon>
        <taxon>Mammalia</taxon>
        <taxon>Eutheria</taxon>
        <taxon>Euarchontoglires</taxon>
        <taxon>Primates</taxon>
        <taxon>Haplorrhini</taxon>
        <taxon>Catarrhini</taxon>
        <taxon>Hominidae</taxon>
        <taxon>Homo</taxon>
    </lineage>
</organism>
<gene>
    <name type="primary">CTSE</name>
</gene>
<feature type="signal peptide" evidence="9">
    <location>
        <begin position="1"/>
        <end position="19"/>
    </location>
</feature>
<feature type="propeptide" id="PRO_0000025974" description="Activation peptide" evidence="6 9">
    <location>
        <begin position="20"/>
        <end position="53"/>
    </location>
</feature>
<feature type="chain" id="PRO_0000025975" description="Cathepsin E form I">
    <location>
        <begin position="54"/>
        <end position="396"/>
    </location>
</feature>
<feature type="chain" id="PRO_0000354668" description="Cathepsin E form II">
    <location>
        <begin position="57"/>
        <end position="396"/>
    </location>
</feature>
<feature type="domain" description="Peptidase A1" evidence="2">
    <location>
        <begin position="78"/>
        <end position="396"/>
    </location>
</feature>
<feature type="active site" evidence="3">
    <location>
        <position position="96"/>
    </location>
</feature>
<feature type="active site" evidence="3">
    <location>
        <position position="281"/>
    </location>
</feature>
<feature type="glycosylation site" description="N-linked (GlcNAc...) asparagine">
    <location>
        <position position="90"/>
    </location>
</feature>
<feature type="disulfide bond" description="Interchain" evidence="7">
    <location>
        <position position="60"/>
    </location>
</feature>
<feature type="disulfide bond" evidence="1">
    <location>
        <begin position="109"/>
        <end position="114"/>
    </location>
</feature>
<feature type="disulfide bond" evidence="1">
    <location>
        <begin position="272"/>
        <end position="276"/>
    </location>
</feature>
<feature type="disulfide bond" evidence="1">
    <location>
        <begin position="314"/>
        <end position="351"/>
    </location>
</feature>
<feature type="splice variant" id="VSP_059425" description="In isoform 3." evidence="12">
    <original>S</original>
    <variation>SAFATQ</variation>
    <location>
        <position position="154"/>
    </location>
</feature>
<feature type="splice variant" id="VSP_059426" description="In isoform 2." evidence="11">
    <original>IQVGGTVMFCSEGCQAIVDTGTSLITGPSDKIKQLQNAIGAAPVDGEYAVECANLNVMPDVTFTINGVPYTLSPTAYTLLDFVDGMQFCSSGFQGLDIHPPAGPLWILGDVFIRQFYSVFDRGNNRVGLAPAV</original>
    <variation>MLWSVPTLTSCRMSPSPLTESPIPSAQLPTPYWTSWMECSSAAVAFKDLTSTLQLGPSGSWGMSSFDSFTQSLTVGITVWDWPQQSPKEGPCVCACLSDR</variation>
    <location>
        <begin position="263"/>
        <end position="395"/>
    </location>
</feature>
<feature type="sequence variant" id="VAR_061731" description="In dbSNP:rs57621203.">
    <original>I</original>
    <variation>V</variation>
    <location>
        <position position="82"/>
    </location>
</feature>
<feature type="sequence variant" id="VAR_014572" description="In dbSNP:rs6503.">
    <original>T</original>
    <variation>I</variation>
    <location>
        <position position="324"/>
    </location>
</feature>
<feature type="mutagenesis site" description="Abolishes homodimerization." evidence="7">
    <original>C</original>
    <variation>A</variation>
    <location>
        <position position="60"/>
    </location>
</feature>
<feature type="strand" evidence="14">
    <location>
        <begin position="22"/>
        <end position="25"/>
    </location>
</feature>
<feature type="helix" evidence="14">
    <location>
        <begin position="71"/>
        <end position="73"/>
    </location>
</feature>
<feature type="strand" evidence="14">
    <location>
        <begin position="74"/>
        <end position="76"/>
    </location>
</feature>
<feature type="strand" evidence="14">
    <location>
        <begin position="79"/>
        <end position="84"/>
    </location>
</feature>
<feature type="turn" evidence="14">
    <location>
        <begin position="85"/>
        <end position="88"/>
    </location>
</feature>
<feature type="strand" evidence="14">
    <location>
        <begin position="89"/>
        <end position="96"/>
    </location>
</feature>
<feature type="strand" evidence="14">
    <location>
        <begin position="102"/>
        <end position="106"/>
    </location>
</feature>
<feature type="helix" evidence="14">
    <location>
        <begin position="112"/>
        <end position="114"/>
    </location>
</feature>
<feature type="helix" evidence="14">
    <location>
        <begin position="122"/>
        <end position="124"/>
    </location>
</feature>
<feature type="strand" evidence="14">
    <location>
        <begin position="134"/>
        <end position="141"/>
    </location>
</feature>
<feature type="strand" evidence="14">
    <location>
        <begin position="143"/>
        <end position="155"/>
    </location>
</feature>
<feature type="strand" evidence="14">
    <location>
        <begin position="158"/>
        <end position="168"/>
    </location>
</feature>
<feature type="helix" evidence="14">
    <location>
        <begin position="174"/>
        <end position="178"/>
    </location>
</feature>
<feature type="strand" evidence="14">
    <location>
        <begin position="182"/>
        <end position="186"/>
    </location>
</feature>
<feature type="helix" evidence="14">
    <location>
        <begin position="190"/>
        <end position="192"/>
    </location>
</feature>
<feature type="helix" evidence="14">
    <location>
        <begin position="194"/>
        <end position="196"/>
    </location>
</feature>
<feature type="helix" evidence="14">
    <location>
        <begin position="200"/>
        <end position="206"/>
    </location>
</feature>
<feature type="strand" evidence="14">
    <location>
        <begin position="211"/>
        <end position="218"/>
    </location>
</feature>
<feature type="strand" evidence="14">
    <location>
        <begin position="230"/>
        <end position="233"/>
    </location>
</feature>
<feature type="helix" evidence="14">
    <location>
        <begin position="238"/>
        <end position="240"/>
    </location>
</feature>
<feature type="strand" evidence="14">
    <location>
        <begin position="246"/>
        <end position="249"/>
    </location>
</feature>
<feature type="turn" evidence="14">
    <location>
        <begin position="253"/>
        <end position="256"/>
    </location>
</feature>
<feature type="strand" evidence="14">
    <location>
        <begin position="257"/>
        <end position="265"/>
    </location>
</feature>
<feature type="strand" evidence="14">
    <location>
        <begin position="268"/>
        <end position="271"/>
    </location>
</feature>
<feature type="strand" evidence="14">
    <location>
        <begin position="276"/>
        <end position="280"/>
    </location>
</feature>
<feature type="strand" evidence="14">
    <location>
        <begin position="285"/>
        <end position="289"/>
    </location>
</feature>
<feature type="helix" evidence="14">
    <location>
        <begin position="291"/>
        <end position="301"/>
    </location>
</feature>
<feature type="strand" evidence="14">
    <location>
        <begin position="307"/>
        <end position="312"/>
    </location>
</feature>
<feature type="helix" evidence="14">
    <location>
        <begin position="314"/>
        <end position="319"/>
    </location>
</feature>
<feature type="strand" evidence="14">
    <location>
        <begin position="323"/>
        <end position="327"/>
    </location>
</feature>
<feature type="strand" evidence="14">
    <location>
        <begin position="330"/>
        <end position="334"/>
    </location>
</feature>
<feature type="turn" evidence="14">
    <location>
        <begin position="336"/>
        <end position="338"/>
    </location>
</feature>
<feature type="strand" evidence="14">
    <location>
        <begin position="339"/>
        <end position="341"/>
    </location>
</feature>
<feature type="strand" evidence="14">
    <location>
        <begin position="351"/>
        <end position="357"/>
    </location>
</feature>
<feature type="turn" evidence="14">
    <location>
        <begin position="362"/>
        <end position="364"/>
    </location>
</feature>
<feature type="strand" evidence="14">
    <location>
        <begin position="368"/>
        <end position="370"/>
    </location>
</feature>
<feature type="helix" evidence="14">
    <location>
        <begin position="372"/>
        <end position="377"/>
    </location>
</feature>
<feature type="strand" evidence="14">
    <location>
        <begin position="378"/>
        <end position="383"/>
    </location>
</feature>
<feature type="turn" evidence="14">
    <location>
        <begin position="384"/>
        <end position="387"/>
    </location>
</feature>
<feature type="strand" evidence="14">
    <location>
        <begin position="388"/>
        <end position="394"/>
    </location>
</feature>
<comment type="function">
    <text evidence="10">May have a role in immune function. Probably involved in the processing of antigenic peptides during MHC class II-mediated antigen presentation. May play a role in activation-induced lymphocyte depletion in the thymus, and in neuronal degeneration and glial cell activation in the brain.</text>
</comment>
<comment type="catalytic activity">
    <reaction evidence="7 10">
        <text>Similar to cathepsin D, but slightly broader specificity.</text>
        <dbReference type="EC" id="3.4.23.34"/>
    </reaction>
</comment>
<comment type="biophysicochemical properties">
    <kinetics>
        <KM evidence="9">0.06 mM for hemoglobin</KM>
        <KM evidence="9">0.13 mM for Pro-Pro-Thr-Ile-Phe-Phe(4-NO2)-Arg-Leu</KM>
        <KM evidence="9">0.04 mM for Lys-Pro-Ile-Glu-Phe-Phe(4-NO2)-Arg-Leu</KM>
    </kinetics>
</comment>
<comment type="subunit">
    <text evidence="7">Homodimer; disulfide-linked.</text>
</comment>
<comment type="subcellular location">
    <subcellularLocation>
        <location evidence="8">Endosome</location>
    </subcellularLocation>
    <text>The proenzyme is localized to the endoplasmic reticulum and Golgi apparatus, while the mature enzyme is localized to the endosome.</text>
</comment>
<comment type="alternative products">
    <event type="alternative splicing"/>
    <isoform>
        <id>P14091-1</id>
        <name>1</name>
        <sequence type="displayed"/>
    </isoform>
    <isoform>
        <id>P14091-2</id>
        <name>2</name>
        <sequence type="described" ref="VSP_059426"/>
    </isoform>
    <isoform>
        <id>P14091-3</id>
        <name>3</name>
        <sequence type="described" ref="VSP_059425"/>
    </isoform>
</comment>
<comment type="tissue specificity">
    <text evidence="4 5 10">Expressed abundantly in the stomach, the Clara cells of the lung and activated B-lymphocytes, and at lower levels in lymph nodes, skin and spleen. Not expressed in resting B-lymphocytes.</text>
</comment>
<comment type="PTM">
    <text evidence="6 8 9">Glycosylated. The nature of the carbohydrate chain varies between cell types. In fibroblasts, the proenzyme contains a high mannose-type oligosaccharide, while the mature enzyme contains a complex-type oligosaccharide. In erythrocyte membranes, both the proenzyme and mature enzyme contain a complex-type oligosaccharide.</text>
</comment>
<comment type="PTM">
    <text>Two forms are produced by autocatalytic cleavage, form I begins at Ile-54, form II begins at Thr-57.</text>
</comment>
<comment type="miscellaneous">
    <molecule>Isoform 3</molecule>
    <text evidence="13">Dubious isoform produced through aberrant splice sites.</text>
</comment>
<comment type="similarity">
    <text evidence="13">Belongs to the peptidase A1 family.</text>
</comment>
<keyword id="KW-0002">3D-structure</keyword>
<keyword id="KW-0025">Alternative splicing</keyword>
<keyword id="KW-0064">Aspartyl protease</keyword>
<keyword id="KW-0068">Autocatalytic cleavage</keyword>
<keyword id="KW-0903">Direct protein sequencing</keyword>
<keyword id="KW-1015">Disulfide bond</keyword>
<keyword id="KW-0967">Endosome</keyword>
<keyword id="KW-0325">Glycoprotein</keyword>
<keyword id="KW-0378">Hydrolase</keyword>
<keyword id="KW-0645">Protease</keyword>
<keyword id="KW-1267">Proteomics identification</keyword>
<keyword id="KW-1185">Reference proteome</keyword>
<keyword id="KW-0732">Signal</keyword>
<keyword id="KW-0865">Zymogen</keyword>
<name>CATE_HUMAN</name>
<sequence>MKTLLLLLLVLLELGEAQGSLHRVPLRRHPSLKKKLRARSQLSEFWKSHNLDMIQFTESCSMDQSAKEPLINYLDMEYFGTISIGSPPQNFTVIFDTGSSNLWVPSVYCTSPACKTHSRFQPSQSSTYSQPGQSFSIQYGTGSLSGIIGADQVSVEGLTVVGQQFGESVTEPGQTFVDAEFDGILGLGYPSLAVGGVTPVFDNMMAQNLVDLPMFSVYMSSNPEGGAGSELIFGGYDHSHFSGSLNWVPVTKQAYWQIALDNIQVGGTVMFCSEGCQAIVDTGTSLITGPSDKIKQLQNAIGAAPVDGEYAVECANLNVMPDVTFTINGVPYTLSPTAYTLLDFVDGMQFCSSGFQGLDIHPPAGPLWILGDVFIRQFYSVFDRGNNRVGLAPAVP</sequence>
<reference key="1">
    <citation type="journal article" date="1989" name="J. Biol. Chem.">
        <title>Human gastric cathepsin E. Predicted sequence, localization to chromosome 1, and sequence homology with other aspartic proteinases.</title>
        <authorList>
            <person name="Azuma T."/>
            <person name="Pals G."/>
            <person name="Mohandas T.K."/>
            <person name="Couvreur J.M."/>
            <person name="Taggart R.T."/>
        </authorList>
    </citation>
    <scope>NUCLEOTIDE SEQUENCE [MRNA] (ISOFORM 1)</scope>
    <source>
        <tissue>Gastric mucosa</tissue>
    </source>
</reference>
<reference key="2">
    <citation type="journal article" date="1992" name="J. Biol. Chem.">
        <title>Human gastric cathepsin E gene. Multiple transcripts result from alternative polyadenylation of the primary transcripts of a single gene locus at 1q31-q32.</title>
        <authorList>
            <person name="Azuma T."/>
            <person name="Liu W.G."/>
            <person name="Vander Laan D.J."/>
            <person name="Bowcock A.M."/>
            <person name="Taggart R.T."/>
        </authorList>
    </citation>
    <scope>NUCLEOTIDE SEQUENCE [GENOMIC DNA] (ISOFORM 1)</scope>
    <scope>TISSUE SPECIFICITY</scope>
</reference>
<reference key="3">
    <citation type="journal article" date="1994" name="J. Biol. Chem.">
        <title>Subcellular localization and targeting of cathepsin E.</title>
        <authorList>
            <person name="Finley E.M."/>
            <person name="Kornfeld S."/>
        </authorList>
    </citation>
    <scope>NUCLEOTIDE SEQUENCE [MRNA] (ISOFORMS 1 AND 3)</scope>
    <scope>SUBCELLULAR LOCATION</scope>
    <scope>GLYCOSYLATION</scope>
    <source>
        <tissue>Intestine</tissue>
    </source>
</reference>
<reference key="4">
    <citation type="journal article" date="2003" name="Biochim. Biophys. Acta">
        <title>An alternatively spliced variant of cathepsin E in human gastric adenocarcinoma cells.</title>
        <authorList>
            <person name="Tatnell P.J."/>
            <person name="Cook M."/>
            <person name="Kay J."/>
        </authorList>
    </citation>
    <scope>NUCLEOTIDE SEQUENCE [MRNA] (ISOFORMS 1 AND 2)</scope>
    <source>
        <tissue>Gastric adenocarcinoma</tissue>
    </source>
</reference>
<reference key="5">
    <citation type="journal article" date="2004" name="Nat. Genet.">
        <title>Complete sequencing and characterization of 21,243 full-length human cDNAs.</title>
        <authorList>
            <person name="Ota T."/>
            <person name="Suzuki Y."/>
            <person name="Nishikawa T."/>
            <person name="Otsuki T."/>
            <person name="Sugiyama T."/>
            <person name="Irie R."/>
            <person name="Wakamatsu A."/>
            <person name="Hayashi K."/>
            <person name="Sato H."/>
            <person name="Nagai K."/>
            <person name="Kimura K."/>
            <person name="Makita H."/>
            <person name="Sekine M."/>
            <person name="Obayashi M."/>
            <person name="Nishi T."/>
            <person name="Shibahara T."/>
            <person name="Tanaka T."/>
            <person name="Ishii S."/>
            <person name="Yamamoto J."/>
            <person name="Saito K."/>
            <person name="Kawai Y."/>
            <person name="Isono Y."/>
            <person name="Nakamura Y."/>
            <person name="Nagahari K."/>
            <person name="Murakami K."/>
            <person name="Yasuda T."/>
            <person name="Iwayanagi T."/>
            <person name="Wagatsuma M."/>
            <person name="Shiratori A."/>
            <person name="Sudo H."/>
            <person name="Hosoiri T."/>
            <person name="Kaku Y."/>
            <person name="Kodaira H."/>
            <person name="Kondo H."/>
            <person name="Sugawara M."/>
            <person name="Takahashi M."/>
            <person name="Kanda K."/>
            <person name="Yokoi T."/>
            <person name="Furuya T."/>
            <person name="Kikkawa E."/>
            <person name="Omura Y."/>
            <person name="Abe K."/>
            <person name="Kamihara K."/>
            <person name="Katsuta N."/>
            <person name="Sato K."/>
            <person name="Tanikawa M."/>
            <person name="Yamazaki M."/>
            <person name="Ninomiya K."/>
            <person name="Ishibashi T."/>
            <person name="Yamashita H."/>
            <person name="Murakawa K."/>
            <person name="Fujimori K."/>
            <person name="Tanai H."/>
            <person name="Kimata M."/>
            <person name="Watanabe M."/>
            <person name="Hiraoka S."/>
            <person name="Chiba Y."/>
            <person name="Ishida S."/>
            <person name="Ono Y."/>
            <person name="Takiguchi S."/>
            <person name="Watanabe S."/>
            <person name="Yosida M."/>
            <person name="Hotuta T."/>
            <person name="Kusano J."/>
            <person name="Kanehori K."/>
            <person name="Takahashi-Fujii A."/>
            <person name="Hara H."/>
            <person name="Tanase T.-O."/>
            <person name="Nomura Y."/>
            <person name="Togiya S."/>
            <person name="Komai F."/>
            <person name="Hara R."/>
            <person name="Takeuchi K."/>
            <person name="Arita M."/>
            <person name="Imose N."/>
            <person name="Musashino K."/>
            <person name="Yuuki H."/>
            <person name="Oshima A."/>
            <person name="Sasaki N."/>
            <person name="Aotsuka S."/>
            <person name="Yoshikawa Y."/>
            <person name="Matsunawa H."/>
            <person name="Ichihara T."/>
            <person name="Shiohata N."/>
            <person name="Sano S."/>
            <person name="Moriya S."/>
            <person name="Momiyama H."/>
            <person name="Satoh N."/>
            <person name="Takami S."/>
            <person name="Terashima Y."/>
            <person name="Suzuki O."/>
            <person name="Nakagawa S."/>
            <person name="Senoh A."/>
            <person name="Mizoguchi H."/>
            <person name="Goto Y."/>
            <person name="Shimizu F."/>
            <person name="Wakebe H."/>
            <person name="Hishigaki H."/>
            <person name="Watanabe T."/>
            <person name="Sugiyama A."/>
            <person name="Takemoto M."/>
            <person name="Kawakami B."/>
            <person name="Yamazaki M."/>
            <person name="Watanabe K."/>
            <person name="Kumagai A."/>
            <person name="Itakura S."/>
            <person name="Fukuzumi Y."/>
            <person name="Fujimori Y."/>
            <person name="Komiyama M."/>
            <person name="Tashiro H."/>
            <person name="Tanigami A."/>
            <person name="Fujiwara T."/>
            <person name="Ono T."/>
            <person name="Yamada K."/>
            <person name="Fujii Y."/>
            <person name="Ozaki K."/>
            <person name="Hirao M."/>
            <person name="Ohmori Y."/>
            <person name="Kawabata A."/>
            <person name="Hikiji T."/>
            <person name="Kobatake N."/>
            <person name="Inagaki H."/>
            <person name="Ikema Y."/>
            <person name="Okamoto S."/>
            <person name="Okitani R."/>
            <person name="Kawakami T."/>
            <person name="Noguchi S."/>
            <person name="Itoh T."/>
            <person name="Shigeta K."/>
            <person name="Senba T."/>
            <person name="Matsumura K."/>
            <person name="Nakajima Y."/>
            <person name="Mizuno T."/>
            <person name="Morinaga M."/>
            <person name="Sasaki M."/>
            <person name="Togashi T."/>
            <person name="Oyama M."/>
            <person name="Hata H."/>
            <person name="Watanabe M."/>
            <person name="Komatsu T."/>
            <person name="Mizushima-Sugano J."/>
            <person name="Satoh T."/>
            <person name="Shirai Y."/>
            <person name="Takahashi Y."/>
            <person name="Nakagawa K."/>
            <person name="Okumura K."/>
            <person name="Nagase T."/>
            <person name="Nomura N."/>
            <person name="Kikuchi H."/>
            <person name="Masuho Y."/>
            <person name="Yamashita R."/>
            <person name="Nakai K."/>
            <person name="Yada T."/>
            <person name="Nakamura Y."/>
            <person name="Ohara O."/>
            <person name="Isogai T."/>
            <person name="Sugano S."/>
        </authorList>
    </citation>
    <scope>NUCLEOTIDE SEQUENCE [LARGE SCALE MRNA] (ISOFORM 1)</scope>
    <source>
        <tissue>Stomach</tissue>
    </source>
</reference>
<reference key="6">
    <citation type="journal article" date="2006" name="Nature">
        <title>The DNA sequence and biological annotation of human chromosome 1.</title>
        <authorList>
            <person name="Gregory S.G."/>
            <person name="Barlow K.F."/>
            <person name="McLay K.E."/>
            <person name="Kaul R."/>
            <person name="Swarbreck D."/>
            <person name="Dunham A."/>
            <person name="Scott C.E."/>
            <person name="Howe K.L."/>
            <person name="Woodfine K."/>
            <person name="Spencer C.C.A."/>
            <person name="Jones M.C."/>
            <person name="Gillson C."/>
            <person name="Searle S."/>
            <person name="Zhou Y."/>
            <person name="Kokocinski F."/>
            <person name="McDonald L."/>
            <person name="Evans R."/>
            <person name="Phillips K."/>
            <person name="Atkinson A."/>
            <person name="Cooper R."/>
            <person name="Jones C."/>
            <person name="Hall R.E."/>
            <person name="Andrews T.D."/>
            <person name="Lloyd C."/>
            <person name="Ainscough R."/>
            <person name="Almeida J.P."/>
            <person name="Ambrose K.D."/>
            <person name="Anderson F."/>
            <person name="Andrew R.W."/>
            <person name="Ashwell R.I.S."/>
            <person name="Aubin K."/>
            <person name="Babbage A.K."/>
            <person name="Bagguley C.L."/>
            <person name="Bailey J."/>
            <person name="Beasley H."/>
            <person name="Bethel G."/>
            <person name="Bird C.P."/>
            <person name="Bray-Allen S."/>
            <person name="Brown J.Y."/>
            <person name="Brown A.J."/>
            <person name="Buckley D."/>
            <person name="Burton J."/>
            <person name="Bye J."/>
            <person name="Carder C."/>
            <person name="Chapman J.C."/>
            <person name="Clark S.Y."/>
            <person name="Clarke G."/>
            <person name="Clee C."/>
            <person name="Cobley V."/>
            <person name="Collier R.E."/>
            <person name="Corby N."/>
            <person name="Coville G.J."/>
            <person name="Davies J."/>
            <person name="Deadman R."/>
            <person name="Dunn M."/>
            <person name="Earthrowl M."/>
            <person name="Ellington A.G."/>
            <person name="Errington H."/>
            <person name="Frankish A."/>
            <person name="Frankland J."/>
            <person name="French L."/>
            <person name="Garner P."/>
            <person name="Garnett J."/>
            <person name="Gay L."/>
            <person name="Ghori M.R.J."/>
            <person name="Gibson R."/>
            <person name="Gilby L.M."/>
            <person name="Gillett W."/>
            <person name="Glithero R.J."/>
            <person name="Grafham D.V."/>
            <person name="Griffiths C."/>
            <person name="Griffiths-Jones S."/>
            <person name="Grocock R."/>
            <person name="Hammond S."/>
            <person name="Harrison E.S.I."/>
            <person name="Hart E."/>
            <person name="Haugen E."/>
            <person name="Heath P.D."/>
            <person name="Holmes S."/>
            <person name="Holt K."/>
            <person name="Howden P.J."/>
            <person name="Hunt A.R."/>
            <person name="Hunt S.E."/>
            <person name="Hunter G."/>
            <person name="Isherwood J."/>
            <person name="James R."/>
            <person name="Johnson C."/>
            <person name="Johnson D."/>
            <person name="Joy A."/>
            <person name="Kay M."/>
            <person name="Kershaw J.K."/>
            <person name="Kibukawa M."/>
            <person name="Kimberley A.M."/>
            <person name="King A."/>
            <person name="Knights A.J."/>
            <person name="Lad H."/>
            <person name="Laird G."/>
            <person name="Lawlor S."/>
            <person name="Leongamornlert D.A."/>
            <person name="Lloyd D.M."/>
            <person name="Loveland J."/>
            <person name="Lovell J."/>
            <person name="Lush M.J."/>
            <person name="Lyne R."/>
            <person name="Martin S."/>
            <person name="Mashreghi-Mohammadi M."/>
            <person name="Matthews L."/>
            <person name="Matthews N.S.W."/>
            <person name="McLaren S."/>
            <person name="Milne S."/>
            <person name="Mistry S."/>
            <person name="Moore M.J.F."/>
            <person name="Nickerson T."/>
            <person name="O'Dell C.N."/>
            <person name="Oliver K."/>
            <person name="Palmeiri A."/>
            <person name="Palmer S.A."/>
            <person name="Parker A."/>
            <person name="Patel D."/>
            <person name="Pearce A.V."/>
            <person name="Peck A.I."/>
            <person name="Pelan S."/>
            <person name="Phelps K."/>
            <person name="Phillimore B.J."/>
            <person name="Plumb R."/>
            <person name="Rajan J."/>
            <person name="Raymond C."/>
            <person name="Rouse G."/>
            <person name="Saenphimmachak C."/>
            <person name="Sehra H.K."/>
            <person name="Sheridan E."/>
            <person name="Shownkeen R."/>
            <person name="Sims S."/>
            <person name="Skuce C.D."/>
            <person name="Smith M."/>
            <person name="Steward C."/>
            <person name="Subramanian S."/>
            <person name="Sycamore N."/>
            <person name="Tracey A."/>
            <person name="Tromans A."/>
            <person name="Van Helmond Z."/>
            <person name="Wall M."/>
            <person name="Wallis J.M."/>
            <person name="White S."/>
            <person name="Whitehead S.L."/>
            <person name="Wilkinson J.E."/>
            <person name="Willey D.L."/>
            <person name="Williams H."/>
            <person name="Wilming L."/>
            <person name="Wray P.W."/>
            <person name="Wu Z."/>
            <person name="Coulson A."/>
            <person name="Vaudin M."/>
            <person name="Sulston J.E."/>
            <person name="Durbin R.M."/>
            <person name="Hubbard T."/>
            <person name="Wooster R."/>
            <person name="Dunham I."/>
            <person name="Carter N.P."/>
            <person name="McVean G."/>
            <person name="Ross M.T."/>
            <person name="Harrow J."/>
            <person name="Olson M.V."/>
            <person name="Beck S."/>
            <person name="Rogers J."/>
            <person name="Bentley D.R."/>
        </authorList>
    </citation>
    <scope>NUCLEOTIDE SEQUENCE [LARGE SCALE GENOMIC DNA]</scope>
</reference>
<reference key="7">
    <citation type="submission" date="2005-07" db="EMBL/GenBank/DDBJ databases">
        <authorList>
            <person name="Mural R.J."/>
            <person name="Istrail S."/>
            <person name="Sutton G.G."/>
            <person name="Florea L."/>
            <person name="Halpern A.L."/>
            <person name="Mobarry C.M."/>
            <person name="Lippert R."/>
            <person name="Walenz B."/>
            <person name="Shatkay H."/>
            <person name="Dew I."/>
            <person name="Miller J.R."/>
            <person name="Flanigan M.J."/>
            <person name="Edwards N.J."/>
            <person name="Bolanos R."/>
            <person name="Fasulo D."/>
            <person name="Halldorsson B.V."/>
            <person name="Hannenhalli S."/>
            <person name="Turner R."/>
            <person name="Yooseph S."/>
            <person name="Lu F."/>
            <person name="Nusskern D.R."/>
            <person name="Shue B.C."/>
            <person name="Zheng X.H."/>
            <person name="Zhong F."/>
            <person name="Delcher A.L."/>
            <person name="Huson D.H."/>
            <person name="Kravitz S.A."/>
            <person name="Mouchard L."/>
            <person name="Reinert K."/>
            <person name="Remington K.A."/>
            <person name="Clark A.G."/>
            <person name="Waterman M.S."/>
            <person name="Eichler E.E."/>
            <person name="Adams M.D."/>
            <person name="Hunkapiller M.W."/>
            <person name="Myers E.W."/>
            <person name="Venter J.C."/>
        </authorList>
    </citation>
    <scope>NUCLEOTIDE SEQUENCE [LARGE SCALE GENOMIC DNA]</scope>
</reference>
<reference key="8">
    <citation type="journal article" date="2004" name="Genome Res.">
        <title>The status, quality, and expansion of the NIH full-length cDNA project: the Mammalian Gene Collection (MGC).</title>
        <authorList>
            <consortium name="The MGC Project Team"/>
        </authorList>
    </citation>
    <scope>NUCLEOTIDE SEQUENCE [LARGE SCALE MRNA] (ISOFORM 1)</scope>
    <source>
        <tissue>Brain</tissue>
    </source>
</reference>
<reference key="9">
    <citation type="journal article" date="1993" name="Arch. Biochem. Biophys.">
        <title>Isolation and biochemical characterization of procathepsin E from human erythrocyte membranes.</title>
        <authorList>
            <person name="Takeda-Ezaki M."/>
            <person name="Yamamoto K."/>
        </authorList>
    </citation>
    <scope>PROTEIN SEQUENCE OF 20-38 AND 54-76</scope>
    <scope>BIOPHYSICOCHEMICAL PROPERTIES</scope>
    <scope>AUTOCATALYTIC CLEAVAGE</scope>
    <scope>GLYCOSYLATION</scope>
    <source>
        <tissue>Erythrocyte</tissue>
    </source>
</reference>
<reference key="10">
    <citation type="journal article" date="1990" name="Biochem. Biophys. Res. Commun.">
        <title>Structural evidence for two isozymic forms and the carbohydrate attachment site of human gastric cathepsin E.</title>
        <authorList>
            <person name="Athauda S.B.P."/>
            <person name="Matsuzaki O."/>
            <person name="Kgeyama T."/>
            <person name="Takahashi K."/>
        </authorList>
    </citation>
    <scope>PROTEIN SEQUENCE OF 54-68; 77-95; 141-154; 275-285 AND 389-396</scope>
    <scope>GLYCOSYLATION</scope>
    <source>
        <tissue>Gastric mucosa</tissue>
    </source>
</reference>
<reference key="11">
    <citation type="journal article" date="1995" name="FEBS Lett.">
        <title>Monomeric human cathepsin E.</title>
        <authorList>
            <person name="Fowler S.D."/>
            <person name="Kay J."/>
            <person name="Dunn B.M."/>
            <person name="Tatnell P.J."/>
        </authorList>
    </citation>
    <scope>CATALYTIC ACTIVITY</scope>
    <scope>SUBUNIT</scope>
    <scope>DISULFIDE BONDS</scope>
    <scope>MUTAGENESIS OF CYS-60</scope>
</reference>
<reference key="12">
    <citation type="journal article" date="1996" name="Eur. J. Immunol.">
        <title>Regulation of cathepsin E expression during human B cell differentiation in vitro.</title>
        <authorList>
            <person name="Sealy L."/>
            <person name="Mota F."/>
            <person name="Rayment N."/>
            <person name="Tatnell P.J."/>
            <person name="Kay J."/>
            <person name="Chain B."/>
        </authorList>
    </citation>
    <scope>FUNCTION</scope>
    <scope>CATALYTIC ACTIVITY</scope>
    <scope>TISSUE SPECIFICITY</scope>
</reference>
<reference key="13">
    <citation type="journal article" date="2001" name="Eur. J. Biochem.">
        <title>Regulation of human and mouse procathepsin E gene expression.</title>
        <authorList>
            <person name="Cook M."/>
            <person name="Caswell R.C."/>
            <person name="Richards R.J."/>
            <person name="Kay J."/>
            <person name="Tatnell P.J."/>
        </authorList>
    </citation>
    <scope>TISSUE SPECIFICITY</scope>
</reference>
<accession>P14091</accession>
<accession>Q5TZ01</accession>
<accession>Q5TZ02</accession>
<accession>Q9NY58</accession>
<accession>Q9UCE3</accession>
<accession>Q9UCE4</accession>
<protein>
    <recommendedName>
        <fullName>Cathepsin E</fullName>
        <ecNumber>3.4.23.34</ecNumber>
    </recommendedName>
    <component>
        <recommendedName>
            <fullName>Cathepsin E form I</fullName>
        </recommendedName>
    </component>
    <component>
        <recommendedName>
            <fullName>Cathepsin E form II</fullName>
        </recommendedName>
    </component>
</protein>
<evidence type="ECO:0000250" key="1"/>
<evidence type="ECO:0000255" key="2">
    <source>
        <dbReference type="PROSITE-ProRule" id="PRU01103"/>
    </source>
</evidence>
<evidence type="ECO:0000255" key="3">
    <source>
        <dbReference type="PROSITE-ProRule" id="PRU10094"/>
    </source>
</evidence>
<evidence type="ECO:0000269" key="4">
    <source>
    </source>
</evidence>
<evidence type="ECO:0000269" key="5">
    <source>
    </source>
</evidence>
<evidence type="ECO:0000269" key="6">
    <source>
    </source>
</evidence>
<evidence type="ECO:0000269" key="7">
    <source>
    </source>
</evidence>
<evidence type="ECO:0000269" key="8">
    <source>
    </source>
</evidence>
<evidence type="ECO:0000269" key="9">
    <source>
    </source>
</evidence>
<evidence type="ECO:0000269" key="10">
    <source>
    </source>
</evidence>
<evidence type="ECO:0000303" key="11">
    <source>
    </source>
</evidence>
<evidence type="ECO:0000303" key="12">
    <source>
    </source>
</evidence>
<evidence type="ECO:0000305" key="13"/>
<evidence type="ECO:0007829" key="14">
    <source>
        <dbReference type="PDB" id="1TZS"/>
    </source>
</evidence>
<dbReference type="EC" id="3.4.23.34"/>
<dbReference type="EMBL" id="J05036">
    <property type="protein sequence ID" value="AAA52130.1"/>
    <property type="molecule type" value="mRNA"/>
</dbReference>
<dbReference type="EMBL" id="M84424">
    <property type="protein sequence ID" value="AAA52300.1"/>
    <property type="molecule type" value="Genomic_DNA"/>
</dbReference>
<dbReference type="EMBL" id="M84413">
    <property type="protein sequence ID" value="AAA52300.1"/>
    <property type="status" value="JOINED"/>
    <property type="molecule type" value="Genomic_DNA"/>
</dbReference>
<dbReference type="EMBL" id="M84417">
    <property type="protein sequence ID" value="AAA52300.1"/>
    <property type="status" value="JOINED"/>
    <property type="molecule type" value="Genomic_DNA"/>
</dbReference>
<dbReference type="EMBL" id="M84418">
    <property type="protein sequence ID" value="AAA52300.1"/>
    <property type="status" value="JOINED"/>
    <property type="molecule type" value="Genomic_DNA"/>
</dbReference>
<dbReference type="EMBL" id="M84419">
    <property type="protein sequence ID" value="AAA52300.1"/>
    <property type="status" value="JOINED"/>
    <property type="molecule type" value="Genomic_DNA"/>
</dbReference>
<dbReference type="EMBL" id="M84420">
    <property type="protein sequence ID" value="AAA52300.1"/>
    <property type="status" value="JOINED"/>
    <property type="molecule type" value="Genomic_DNA"/>
</dbReference>
<dbReference type="EMBL" id="M84421">
    <property type="protein sequence ID" value="AAA52300.1"/>
    <property type="status" value="JOINED"/>
    <property type="molecule type" value="Genomic_DNA"/>
</dbReference>
<dbReference type="EMBL" id="M84422">
    <property type="protein sequence ID" value="AAA52300.1"/>
    <property type="status" value="JOINED"/>
    <property type="molecule type" value="Genomic_DNA"/>
</dbReference>
<dbReference type="EMBL" id="AJ250716">
    <property type="protein sequence ID" value="CAB82849.1"/>
    <property type="molecule type" value="mRNA"/>
</dbReference>
<dbReference type="EMBL" id="AJ250717">
    <property type="protein sequence ID" value="CAB82850.1"/>
    <property type="molecule type" value="mRNA"/>
</dbReference>
<dbReference type="EMBL" id="AK292057">
    <property type="protein sequence ID" value="BAF84746.1"/>
    <property type="molecule type" value="mRNA"/>
</dbReference>
<dbReference type="EMBL" id="BX571818">
    <property type="status" value="NOT_ANNOTATED_CDS"/>
    <property type="molecule type" value="Genomic_DNA"/>
</dbReference>
<dbReference type="EMBL" id="CH471067">
    <property type="protein sequence ID" value="EAW91592.1"/>
    <property type="molecule type" value="Genomic_DNA"/>
</dbReference>
<dbReference type="EMBL" id="CH471067">
    <property type="protein sequence ID" value="EAW91593.1"/>
    <property type="molecule type" value="Genomic_DNA"/>
</dbReference>
<dbReference type="EMBL" id="BC042537">
    <property type="protein sequence ID" value="AAH42537.1"/>
    <property type="molecule type" value="mRNA"/>
</dbReference>
<dbReference type="CCDS" id="CCDS73012.1">
    <molecule id="P14091-2"/>
</dbReference>
<dbReference type="CCDS" id="CCDS73013.1">
    <molecule id="P14091-1"/>
</dbReference>
<dbReference type="PIR" id="A42038">
    <property type="entry name" value="A34401"/>
</dbReference>
<dbReference type="RefSeq" id="NP_001304260.1">
    <property type="nucleotide sequence ID" value="NM_001317331.1"/>
</dbReference>
<dbReference type="RefSeq" id="NP_001901.1">
    <molecule id="P14091-1"/>
    <property type="nucleotide sequence ID" value="NM_001910.4"/>
</dbReference>
<dbReference type="RefSeq" id="NP_683865.1">
    <molecule id="P14091-2"/>
    <property type="nucleotide sequence ID" value="NM_148964.3"/>
</dbReference>
<dbReference type="PDB" id="1TZS">
    <property type="method" value="X-ray"/>
    <property type="resolution" value="2.35 A"/>
    <property type="chains" value="A=54-396, P=19-53"/>
</dbReference>
<dbReference type="PDBsum" id="1TZS"/>
<dbReference type="SMR" id="P14091"/>
<dbReference type="BioGRID" id="107890">
    <property type="interactions" value="14"/>
</dbReference>
<dbReference type="FunCoup" id="P14091">
    <property type="interactions" value="254"/>
</dbReference>
<dbReference type="IntAct" id="P14091">
    <property type="interactions" value="12"/>
</dbReference>
<dbReference type="STRING" id="9606.ENSP00000350911"/>
<dbReference type="BindingDB" id="P14091"/>
<dbReference type="ChEMBL" id="CHEMBL3092"/>
<dbReference type="DrugCentral" id="P14091"/>
<dbReference type="GuidetoPHARMACOLOGY" id="2346"/>
<dbReference type="MEROPS" id="A01.010"/>
<dbReference type="GlyCosmos" id="P14091">
    <property type="glycosylation" value="1 site, No reported glycans"/>
</dbReference>
<dbReference type="GlyGen" id="P14091">
    <property type="glycosylation" value="1 site"/>
</dbReference>
<dbReference type="iPTMnet" id="P14091"/>
<dbReference type="PhosphoSitePlus" id="P14091"/>
<dbReference type="BioMuta" id="CTSE"/>
<dbReference type="DMDM" id="46397366"/>
<dbReference type="jPOST" id="P14091"/>
<dbReference type="MassIVE" id="P14091"/>
<dbReference type="PaxDb" id="9606-ENSP00000350911"/>
<dbReference type="PeptideAtlas" id="P14091"/>
<dbReference type="ProteomicsDB" id="53019">
    <molecule id="P14091-3"/>
</dbReference>
<dbReference type="ProteomicsDB" id="53020">
    <molecule id="P14091-1"/>
</dbReference>
<dbReference type="ProteomicsDB" id="53021">
    <molecule id="P14091-2"/>
</dbReference>
<dbReference type="Antibodypedia" id="1957">
    <property type="antibodies" value="301 antibodies from 30 providers"/>
</dbReference>
<dbReference type="DNASU" id="1510"/>
<dbReference type="Ensembl" id="ENST00000358184.7">
    <molecule id="P14091-1"/>
    <property type="protein sequence ID" value="ENSP00000350911.2"/>
    <property type="gene ID" value="ENSG00000196188.12"/>
</dbReference>
<dbReference type="Ensembl" id="ENST00000678498.1">
    <molecule id="P14091-2"/>
    <property type="protein sequence ID" value="ENSP00000504305.1"/>
    <property type="gene ID" value="ENSG00000196188.12"/>
</dbReference>
<dbReference type="GeneID" id="1510"/>
<dbReference type="KEGG" id="hsa:1510"/>
<dbReference type="MANE-Select" id="ENST00000358184.7">
    <property type="protein sequence ID" value="ENSP00000350911.2"/>
    <property type="RefSeq nucleotide sequence ID" value="NM_001910.4"/>
    <property type="RefSeq protein sequence ID" value="NP_001901.1"/>
</dbReference>
<dbReference type="UCSC" id="uc001hdu.3">
    <molecule id="P14091-1"/>
    <property type="organism name" value="human"/>
</dbReference>
<dbReference type="AGR" id="HGNC:2530"/>
<dbReference type="CTD" id="1510"/>
<dbReference type="DisGeNET" id="1510"/>
<dbReference type="GeneCards" id="CTSE"/>
<dbReference type="HGNC" id="HGNC:2530">
    <property type="gene designation" value="CTSE"/>
</dbReference>
<dbReference type="HPA" id="ENSG00000196188">
    <property type="expression patterns" value="Tissue enriched (stomach)"/>
</dbReference>
<dbReference type="MalaCards" id="CTSE"/>
<dbReference type="MIM" id="116890">
    <property type="type" value="gene"/>
</dbReference>
<dbReference type="neXtProt" id="NX_P14091"/>
<dbReference type="OpenTargets" id="ENSG00000196188"/>
<dbReference type="PharmGKB" id="PA27030"/>
<dbReference type="VEuPathDB" id="HostDB:ENSG00000196188"/>
<dbReference type="eggNOG" id="KOG1339">
    <property type="taxonomic scope" value="Eukaryota"/>
</dbReference>
<dbReference type="GeneTree" id="ENSGT00940000161300"/>
<dbReference type="HOGENOM" id="CLU_013253_3_0_1"/>
<dbReference type="InParanoid" id="P14091"/>
<dbReference type="OrthoDB" id="771136at2759"/>
<dbReference type="PAN-GO" id="P14091">
    <property type="GO annotations" value="4 GO annotations based on evolutionary models"/>
</dbReference>
<dbReference type="PhylomeDB" id="P14091"/>
<dbReference type="TreeFam" id="TF314990"/>
<dbReference type="BRENDA" id="3.4.23.34">
    <property type="organism ID" value="2681"/>
</dbReference>
<dbReference type="PathwayCommons" id="P14091"/>
<dbReference type="Reactome" id="R-HSA-2132295">
    <property type="pathway name" value="MHC class II antigen presentation"/>
</dbReference>
<dbReference type="SABIO-RK" id="P14091"/>
<dbReference type="SignaLink" id="P14091"/>
<dbReference type="SIGNOR" id="P14091"/>
<dbReference type="BioGRID-ORCS" id="1510">
    <property type="hits" value="13 hits in 1149 CRISPR screens"/>
</dbReference>
<dbReference type="ChiTaRS" id="CTSE">
    <property type="organism name" value="human"/>
</dbReference>
<dbReference type="EvolutionaryTrace" id="P14091"/>
<dbReference type="GeneWiki" id="Cathepsin_E"/>
<dbReference type="GenomeRNAi" id="1510"/>
<dbReference type="Pharos" id="P14091">
    <property type="development level" value="Tchem"/>
</dbReference>
<dbReference type="PRO" id="PR:P14091"/>
<dbReference type="Proteomes" id="UP000005640">
    <property type="component" value="Chromosome 1"/>
</dbReference>
<dbReference type="RNAct" id="P14091">
    <property type="molecule type" value="protein"/>
</dbReference>
<dbReference type="Bgee" id="ENSG00000196188">
    <property type="expression patterns" value="Expressed in jejunal mucosa and 115 other cell types or tissues"/>
</dbReference>
<dbReference type="GO" id="GO:0005768">
    <property type="term" value="C:endosome"/>
    <property type="evidence" value="ECO:0000314"/>
    <property type="project" value="UniProtKB"/>
</dbReference>
<dbReference type="GO" id="GO:0043231">
    <property type="term" value="C:intracellular membrane-bounded organelle"/>
    <property type="evidence" value="ECO:0000314"/>
    <property type="project" value="HPA"/>
</dbReference>
<dbReference type="GO" id="GO:0004190">
    <property type="term" value="F:aspartic-type endopeptidase activity"/>
    <property type="evidence" value="ECO:0000314"/>
    <property type="project" value="UniProtKB"/>
</dbReference>
<dbReference type="GO" id="GO:0042802">
    <property type="term" value="F:identical protein binding"/>
    <property type="evidence" value="ECO:0007669"/>
    <property type="project" value="Ensembl"/>
</dbReference>
<dbReference type="GO" id="GO:0008233">
    <property type="term" value="F:peptidase activity"/>
    <property type="evidence" value="ECO:0000314"/>
    <property type="project" value="ARUK-UCL"/>
</dbReference>
<dbReference type="GO" id="GO:0019886">
    <property type="term" value="P:antigen processing and presentation of exogenous peptide antigen via MHC class II"/>
    <property type="evidence" value="ECO:0000314"/>
    <property type="project" value="UniProtKB"/>
</dbReference>
<dbReference type="GO" id="GO:0006508">
    <property type="term" value="P:proteolysis"/>
    <property type="evidence" value="ECO:0000314"/>
    <property type="project" value="ARUK-UCL"/>
</dbReference>
<dbReference type="CDD" id="cd05486">
    <property type="entry name" value="Cathespin_E"/>
    <property type="match status" value="1"/>
</dbReference>
<dbReference type="FunFam" id="2.40.70.10:FF:000006">
    <property type="entry name" value="Cathepsin E"/>
    <property type="match status" value="1"/>
</dbReference>
<dbReference type="FunFam" id="2.40.70.10:FF:000004">
    <property type="entry name" value="Pepsin A"/>
    <property type="match status" value="1"/>
</dbReference>
<dbReference type="Gene3D" id="2.40.70.10">
    <property type="entry name" value="Acid Proteases"/>
    <property type="match status" value="2"/>
</dbReference>
<dbReference type="InterPro" id="IPR001461">
    <property type="entry name" value="Aspartic_peptidase_A1"/>
</dbReference>
<dbReference type="InterPro" id="IPR001969">
    <property type="entry name" value="Aspartic_peptidase_AS"/>
</dbReference>
<dbReference type="InterPro" id="IPR012848">
    <property type="entry name" value="Aspartic_peptidase_N"/>
</dbReference>
<dbReference type="InterPro" id="IPR033121">
    <property type="entry name" value="PEPTIDASE_A1"/>
</dbReference>
<dbReference type="InterPro" id="IPR021109">
    <property type="entry name" value="Peptidase_aspartic_dom_sf"/>
</dbReference>
<dbReference type="PANTHER" id="PTHR47966">
    <property type="entry name" value="BETA-SITE APP-CLEAVING ENZYME, ISOFORM A-RELATED"/>
    <property type="match status" value="1"/>
</dbReference>
<dbReference type="PANTHER" id="PTHR47966:SF26">
    <property type="entry name" value="CATHEPSIN E"/>
    <property type="match status" value="1"/>
</dbReference>
<dbReference type="Pfam" id="PF07966">
    <property type="entry name" value="A1_Propeptide"/>
    <property type="match status" value="1"/>
</dbReference>
<dbReference type="Pfam" id="PF00026">
    <property type="entry name" value="Asp"/>
    <property type="match status" value="1"/>
</dbReference>
<dbReference type="PRINTS" id="PR00792">
    <property type="entry name" value="PEPSIN"/>
</dbReference>
<dbReference type="SUPFAM" id="SSF50630">
    <property type="entry name" value="Acid proteases"/>
    <property type="match status" value="1"/>
</dbReference>
<dbReference type="PROSITE" id="PS00141">
    <property type="entry name" value="ASP_PROTEASE"/>
    <property type="match status" value="2"/>
</dbReference>
<dbReference type="PROSITE" id="PS51767">
    <property type="entry name" value="PEPTIDASE_A1"/>
    <property type="match status" value="1"/>
</dbReference>
<proteinExistence type="evidence at protein level"/>